<accession>Q96K78</accession>
<accession>Q14D94</accession>
<accession>Q86SQ2</accession>
<evidence type="ECO:0000255" key="1"/>
<evidence type="ECO:0000255" key="2">
    <source>
        <dbReference type="PROSITE-ProRule" id="PRU00098"/>
    </source>
</evidence>
<evidence type="ECO:0000269" key="3">
    <source>
    </source>
</evidence>
<evidence type="ECO:0000303" key="4">
    <source>
    </source>
</evidence>
<evidence type="ECO:0000305" key="5"/>
<sequence length="797" mass="88909">MASCRAWNLRVLVAVVCGLLTGIILGLGIWRIVIRIQRGKSTSSSSTPTEFCRNGGTWENGRCICTEEWKGLRCTIANFCENSTYMGFTFARIPVGRYGPSLQTCGKDTPNAGNPMAVRLCSLSLYGEIELQKVTIGNCNENLETLEKQVKDVTAPLNNISSEVQILTSDANKLTAENITSATRVVGQIFNTSRNASPEAKKVAIVTVSQLLDASEDAFQRVAATANDDALTTLIEQMETYSLSLGNQSVVEPNIAIQSANFSSENAVGPSNVRFSVQKGASSSLVSSSTFIHTNVDGLNPDAQTELQVLLNMTKNYTKTCGFVVYQNDKLFQSKTFTAKSDFSQKIISSKTDENEQDQSASVDMVFSPKYNQKEFQLYSYACVYWNLSAKDWDTYGCQKDKGTDGFLRCRCNHTTNFAVLMTFKKDYQYPKSLDILSNVGCALSVTGLALTVIFQIVTRKVRKTSVTWVLVNLCISMLIFNLLFVFGIENSNKNLQTSDGDINNIDFDNNDIPRTDTINIPNPMCTAIAALLHYFLLVTFTWNALSAAQLYYLLIRTMKPLPRHFILFISLIGWGVPAIVVAITVGVIYSQNGNNPQWELDYRQEKICWLAIPEPNGVIKSPLLWSFIVPVTIILISNVVMFITISIKVLWKNNQNLTSTKKVSSMKKIVSTLSVAVVFGITWILAYLMLVNDDSIRIVFSYIFCLFNTTQGLQIFILYTVRTKVFQSEASKVLMLLSSIGRRKSLPSVTRPRLRVKMYNFLRSLPTLHERFRLLETSPSTEEITLSESDNAKESI</sequence>
<comment type="function">
    <text>Orphan receptor.</text>
</comment>
<comment type="interaction">
    <interactant intactId="EBI-10290200">
        <id>Q96K78</id>
    </interactant>
    <interactant intactId="EBI-10173166">
        <id>Q5T700</id>
        <label>LDLRAD1</label>
    </interactant>
    <organismsDiffer>false</organismsDiffer>
    <experiments>7</experiments>
</comment>
<comment type="interaction">
    <interactant intactId="EBI-10290200">
        <id>Q96K78</id>
    </interactant>
    <interactant intactId="EBI-1057058">
        <id>Q99523</id>
        <label>SORT1</label>
    </interactant>
    <organismsDiffer>false</organismsDiffer>
    <experiments>3</experiments>
</comment>
<comment type="interaction">
    <interactant intactId="EBI-10290200">
        <id>Q96K78</id>
    </interactant>
    <interactant intactId="EBI-1059156">
        <id>Q9P0L0</id>
        <label>VAPA</label>
    </interactant>
    <organismsDiffer>false</organismsDiffer>
    <experiments>3</experiments>
</comment>
<comment type="interaction">
    <interactant intactId="EBI-10290200">
        <id>Q96K78</id>
    </interactant>
    <interactant intactId="EBI-10174961">
        <id>A8KA83</id>
    </interactant>
    <organismsDiffer>false</organismsDiffer>
    <experiments>3</experiments>
</comment>
<comment type="subcellular location">
    <subcellularLocation>
        <location evidence="1">Membrane</location>
        <topology evidence="1">Multi-pass membrane protein</topology>
    </subcellularLocation>
</comment>
<comment type="similarity">
    <text evidence="5">Belongs to the G-protein coupled receptor 2 family. Adhesion G-protein coupled receptor (ADGR) subfamily.</text>
</comment>
<comment type="sequence caution" evidence="5">
    <conflict type="erroneous initiation">
        <sequence resource="EMBL-CDS" id="AAO27358"/>
    </conflict>
</comment>
<dbReference type="EMBL" id="AY181246">
    <property type="protein sequence ID" value="AAO27358.1"/>
    <property type="status" value="ALT_INIT"/>
    <property type="molecule type" value="mRNA"/>
</dbReference>
<dbReference type="EMBL" id="AK027360">
    <property type="protein sequence ID" value="BAB55061.1"/>
    <property type="molecule type" value="mRNA"/>
</dbReference>
<dbReference type="EMBL" id="CH471052">
    <property type="protein sequence ID" value="EAW79818.1"/>
    <property type="molecule type" value="Genomic_DNA"/>
</dbReference>
<dbReference type="EMBL" id="BC113451">
    <property type="protein sequence ID" value="AAI13452.1"/>
    <property type="molecule type" value="mRNA"/>
</dbReference>
<dbReference type="CCDS" id="CCDS2938.1"/>
<dbReference type="RefSeq" id="NP_116176.2">
    <property type="nucleotide sequence ID" value="NM_032787.3"/>
</dbReference>
<dbReference type="SMR" id="Q96K78"/>
<dbReference type="BioGRID" id="124318">
    <property type="interactions" value="4"/>
</dbReference>
<dbReference type="FunCoup" id="Q96K78">
    <property type="interactions" value="7"/>
</dbReference>
<dbReference type="IntAct" id="Q96K78">
    <property type="interactions" value="4"/>
</dbReference>
<dbReference type="STRING" id="9606.ENSP00000273352"/>
<dbReference type="MEROPS" id="P02.020"/>
<dbReference type="GlyCosmos" id="Q96K78">
    <property type="glycosylation" value="10 sites, No reported glycans"/>
</dbReference>
<dbReference type="GlyGen" id="Q96K78">
    <property type="glycosylation" value="12 sites, 1 O-linked glycan (1 site)"/>
</dbReference>
<dbReference type="iPTMnet" id="Q96K78"/>
<dbReference type="PhosphoSitePlus" id="Q96K78"/>
<dbReference type="BioMuta" id="ADGRG7"/>
<dbReference type="DMDM" id="229462926"/>
<dbReference type="jPOST" id="Q96K78"/>
<dbReference type="MassIVE" id="Q96K78"/>
<dbReference type="PaxDb" id="9606-ENSP00000273352"/>
<dbReference type="PeptideAtlas" id="Q96K78"/>
<dbReference type="ProteomicsDB" id="77050"/>
<dbReference type="Antibodypedia" id="15851">
    <property type="antibodies" value="99 antibodies from 24 providers"/>
</dbReference>
<dbReference type="DNASU" id="84873"/>
<dbReference type="Ensembl" id="ENST00000273352.8">
    <property type="protein sequence ID" value="ENSP00000273352.3"/>
    <property type="gene ID" value="ENSG00000144820.8"/>
</dbReference>
<dbReference type="GeneID" id="84873"/>
<dbReference type="KEGG" id="hsa:84873"/>
<dbReference type="MANE-Select" id="ENST00000273352.8">
    <property type="protein sequence ID" value="ENSP00000273352.3"/>
    <property type="RefSeq nucleotide sequence ID" value="NM_032787.3"/>
    <property type="RefSeq protein sequence ID" value="NP_116176.2"/>
</dbReference>
<dbReference type="UCSC" id="uc003duc.5">
    <property type="organism name" value="human"/>
</dbReference>
<dbReference type="AGR" id="HGNC:19241"/>
<dbReference type="CTD" id="84873"/>
<dbReference type="DisGeNET" id="84873"/>
<dbReference type="GeneCards" id="ADGRG7"/>
<dbReference type="HGNC" id="HGNC:19241">
    <property type="gene designation" value="ADGRG7"/>
</dbReference>
<dbReference type="HPA" id="ENSG00000144820">
    <property type="expression patterns" value="Group enriched (intestine, liver)"/>
</dbReference>
<dbReference type="MIM" id="612307">
    <property type="type" value="gene"/>
</dbReference>
<dbReference type="neXtProt" id="NX_Q96K78"/>
<dbReference type="OpenTargets" id="ENSG00000144820"/>
<dbReference type="PharmGKB" id="PA134982718"/>
<dbReference type="VEuPathDB" id="HostDB:ENSG00000144820"/>
<dbReference type="eggNOG" id="KOG4193">
    <property type="taxonomic scope" value="Eukaryota"/>
</dbReference>
<dbReference type="GeneTree" id="ENSGT00940000159169"/>
<dbReference type="HOGENOM" id="CLU_370321_0_0_1"/>
<dbReference type="InParanoid" id="Q96K78"/>
<dbReference type="OMA" id="DHITCRS"/>
<dbReference type="OrthoDB" id="1100386at2759"/>
<dbReference type="PAN-GO" id="Q96K78">
    <property type="GO annotations" value="3 GO annotations based on evolutionary models"/>
</dbReference>
<dbReference type="PhylomeDB" id="Q96K78"/>
<dbReference type="TreeFam" id="TF351485"/>
<dbReference type="PathwayCommons" id="Q96K78"/>
<dbReference type="SignaLink" id="Q96K78"/>
<dbReference type="BioGRID-ORCS" id="84873">
    <property type="hits" value="11 hits in 1147 CRISPR screens"/>
</dbReference>
<dbReference type="ChiTaRS" id="ADGRG7">
    <property type="organism name" value="human"/>
</dbReference>
<dbReference type="GenomeRNAi" id="84873"/>
<dbReference type="Pharos" id="Q96K78">
    <property type="development level" value="Tbio"/>
</dbReference>
<dbReference type="PRO" id="PR:Q96K78"/>
<dbReference type="Proteomes" id="UP000005640">
    <property type="component" value="Chromosome 3"/>
</dbReference>
<dbReference type="RNAct" id="Q96K78">
    <property type="molecule type" value="protein"/>
</dbReference>
<dbReference type="Bgee" id="ENSG00000144820">
    <property type="expression patterns" value="Expressed in jejunal mucosa and 99 other cell types or tissues"/>
</dbReference>
<dbReference type="ExpressionAtlas" id="Q96K78">
    <property type="expression patterns" value="baseline and differential"/>
</dbReference>
<dbReference type="GO" id="GO:0016020">
    <property type="term" value="C:membrane"/>
    <property type="evidence" value="ECO:0000304"/>
    <property type="project" value="GDB"/>
</dbReference>
<dbReference type="GO" id="GO:0005886">
    <property type="term" value="C:plasma membrane"/>
    <property type="evidence" value="ECO:0000318"/>
    <property type="project" value="GO_Central"/>
</dbReference>
<dbReference type="GO" id="GO:0004930">
    <property type="term" value="F:G protein-coupled receptor activity"/>
    <property type="evidence" value="ECO:0000318"/>
    <property type="project" value="GO_Central"/>
</dbReference>
<dbReference type="GO" id="GO:0007189">
    <property type="term" value="P:adenylate cyclase-activating G protein-coupled receptor signaling pathway"/>
    <property type="evidence" value="ECO:0000318"/>
    <property type="project" value="GO_Central"/>
</dbReference>
<dbReference type="GO" id="GO:0007166">
    <property type="term" value="P:cell surface receptor signaling pathway"/>
    <property type="evidence" value="ECO:0007669"/>
    <property type="project" value="InterPro"/>
</dbReference>
<dbReference type="GO" id="GO:0007186">
    <property type="term" value="P:G protein-coupled receptor signaling pathway"/>
    <property type="evidence" value="ECO:0000304"/>
    <property type="project" value="GDB"/>
</dbReference>
<dbReference type="CDD" id="cd15257">
    <property type="entry name" value="7tmB2_GPR128"/>
    <property type="match status" value="1"/>
</dbReference>
<dbReference type="FunFam" id="1.20.1070.10:FF:000256">
    <property type="entry name" value="Adhesion G protein-coupled receptor G7"/>
    <property type="match status" value="1"/>
</dbReference>
<dbReference type="FunFam" id="2.60.220.50:FF:000025">
    <property type="entry name" value="Adhesion G protein-coupled receptor G7"/>
    <property type="match status" value="1"/>
</dbReference>
<dbReference type="Gene3D" id="2.60.220.50">
    <property type="match status" value="1"/>
</dbReference>
<dbReference type="Gene3D" id="1.20.1070.10">
    <property type="entry name" value="Rhodopsin 7-helix transmembrane proteins"/>
    <property type="match status" value="1"/>
</dbReference>
<dbReference type="InterPro" id="IPR053066">
    <property type="entry name" value="ADGR_G7"/>
</dbReference>
<dbReference type="InterPro" id="IPR057244">
    <property type="entry name" value="GAIN_B"/>
</dbReference>
<dbReference type="InterPro" id="IPR046338">
    <property type="entry name" value="GAIN_dom_sf"/>
</dbReference>
<dbReference type="InterPro" id="IPR017981">
    <property type="entry name" value="GPCR_2-like_7TM"/>
</dbReference>
<dbReference type="InterPro" id="IPR000832">
    <property type="entry name" value="GPCR_2_secretin-like"/>
</dbReference>
<dbReference type="InterPro" id="IPR047938">
    <property type="entry name" value="GPR128_7tmB2"/>
</dbReference>
<dbReference type="InterPro" id="IPR053985">
    <property type="entry name" value="GPR128_GAIN_subdom_A"/>
</dbReference>
<dbReference type="InterPro" id="IPR053986">
    <property type="entry name" value="GPR128_GAIN_subdom_B"/>
</dbReference>
<dbReference type="InterPro" id="IPR053984">
    <property type="entry name" value="GPR128_N"/>
</dbReference>
<dbReference type="InterPro" id="IPR000203">
    <property type="entry name" value="GPS"/>
</dbReference>
<dbReference type="PANTHER" id="PTHR47767">
    <property type="entry name" value="ADHESION G PROTEIN-COUPLED RECEPTOR G7"/>
    <property type="match status" value="1"/>
</dbReference>
<dbReference type="PANTHER" id="PTHR47767:SF1">
    <property type="entry name" value="ADHESION G PROTEIN-COUPLED RECEPTOR G7"/>
    <property type="match status" value="1"/>
</dbReference>
<dbReference type="Pfam" id="PF00002">
    <property type="entry name" value="7tm_2"/>
    <property type="match status" value="1"/>
</dbReference>
<dbReference type="Pfam" id="PF22261">
    <property type="entry name" value="GPR128_GAIN_subdom_B"/>
    <property type="match status" value="1"/>
</dbReference>
<dbReference type="Pfam" id="PF22259">
    <property type="entry name" value="GPR128_GAIN_subdomA"/>
    <property type="match status" value="1"/>
</dbReference>
<dbReference type="Pfam" id="PF22257">
    <property type="entry name" value="GPR128_N"/>
    <property type="match status" value="1"/>
</dbReference>
<dbReference type="Pfam" id="PF01825">
    <property type="entry name" value="GPS"/>
    <property type="match status" value="1"/>
</dbReference>
<dbReference type="PRINTS" id="PR00249">
    <property type="entry name" value="GPCRSECRETIN"/>
</dbReference>
<dbReference type="SMART" id="SM00303">
    <property type="entry name" value="GPS"/>
    <property type="match status" value="1"/>
</dbReference>
<dbReference type="SUPFAM" id="SSF81321">
    <property type="entry name" value="Family A G protein-coupled receptor-like"/>
    <property type="match status" value="1"/>
</dbReference>
<dbReference type="PROSITE" id="PS50261">
    <property type="entry name" value="G_PROTEIN_RECEP_F2_4"/>
    <property type="match status" value="1"/>
</dbReference>
<dbReference type="PROSITE" id="PS50221">
    <property type="entry name" value="GAIN_B"/>
    <property type="match status" value="1"/>
</dbReference>
<keyword id="KW-1015">Disulfide bond</keyword>
<keyword id="KW-0297">G-protein coupled receptor</keyword>
<keyword id="KW-0325">Glycoprotein</keyword>
<keyword id="KW-0472">Membrane</keyword>
<keyword id="KW-1267">Proteomics identification</keyword>
<keyword id="KW-0675">Receptor</keyword>
<keyword id="KW-1185">Reference proteome</keyword>
<keyword id="KW-0732">Signal</keyword>
<keyword id="KW-0807">Transducer</keyword>
<keyword id="KW-0812">Transmembrane</keyword>
<keyword id="KW-1133">Transmembrane helix</keyword>
<feature type="signal peptide" evidence="1">
    <location>
        <begin position="1"/>
        <end position="26"/>
    </location>
</feature>
<feature type="chain" id="PRO_0000012903" description="Adhesion G-protein coupled receptor G7">
    <location>
        <begin position="27"/>
        <end position="797"/>
    </location>
</feature>
<feature type="topological domain" description="Extracellular" evidence="1">
    <location>
        <begin position="27"/>
        <end position="438"/>
    </location>
</feature>
<feature type="transmembrane region" description="Helical; Name=1" evidence="1">
    <location>
        <begin position="439"/>
        <end position="459"/>
    </location>
</feature>
<feature type="topological domain" description="Cytoplasmic" evidence="1">
    <location>
        <begin position="460"/>
        <end position="468"/>
    </location>
</feature>
<feature type="transmembrane region" description="Helical; Name=2" evidence="1">
    <location>
        <begin position="469"/>
        <end position="489"/>
    </location>
</feature>
<feature type="topological domain" description="Extracellular" evidence="1">
    <location>
        <begin position="490"/>
        <end position="528"/>
    </location>
</feature>
<feature type="transmembrane region" description="Helical; Name=3" evidence="1">
    <location>
        <begin position="529"/>
        <end position="549"/>
    </location>
</feature>
<feature type="topological domain" description="Cytoplasmic" evidence="1">
    <location>
        <begin position="550"/>
        <end position="565"/>
    </location>
</feature>
<feature type="transmembrane region" description="Helical; Name=4" evidence="1">
    <location>
        <begin position="566"/>
        <end position="586"/>
    </location>
</feature>
<feature type="topological domain" description="Extracellular" evidence="1">
    <location>
        <begin position="587"/>
        <end position="623"/>
    </location>
</feature>
<feature type="transmembrane region" description="Helical; Name=5" evidence="1">
    <location>
        <begin position="624"/>
        <end position="644"/>
    </location>
</feature>
<feature type="topological domain" description="Cytoplasmic" evidence="1">
    <location>
        <begin position="645"/>
        <end position="669"/>
    </location>
</feature>
<feature type="transmembrane region" description="Helical; Name=6" evidence="1">
    <location>
        <begin position="670"/>
        <end position="690"/>
    </location>
</feature>
<feature type="topological domain" description="Extracellular" evidence="1">
    <location>
        <begin position="691"/>
        <end position="698"/>
    </location>
</feature>
<feature type="transmembrane region" description="Helical; Name=7" evidence="1">
    <location>
        <begin position="699"/>
        <end position="719"/>
    </location>
</feature>
<feature type="topological domain" description="Cytoplasmic" evidence="1">
    <location>
        <begin position="720"/>
        <end position="797"/>
    </location>
</feature>
<feature type="domain" description="GAIN-B" evidence="2">
    <location>
        <begin position="275"/>
        <end position="428"/>
    </location>
</feature>
<feature type="region of interest" description="GPS" evidence="2">
    <location>
        <begin position="383"/>
        <end position="428"/>
    </location>
</feature>
<feature type="glycosylation site" description="N-linked (GlcNAc...) asparagine" evidence="1">
    <location>
        <position position="82"/>
    </location>
</feature>
<feature type="glycosylation site" description="N-linked (GlcNAc...) asparagine" evidence="1">
    <location>
        <position position="159"/>
    </location>
</feature>
<feature type="glycosylation site" description="N-linked (GlcNAc...) asparagine" evidence="1">
    <location>
        <position position="178"/>
    </location>
</feature>
<feature type="glycosylation site" description="N-linked (GlcNAc...) asparagine" evidence="1">
    <location>
        <position position="191"/>
    </location>
</feature>
<feature type="glycosylation site" description="N-linked (GlcNAc...) asparagine" evidence="1">
    <location>
        <position position="247"/>
    </location>
</feature>
<feature type="glycosylation site" description="N-linked (GlcNAc...) asparagine" evidence="1">
    <location>
        <position position="261"/>
    </location>
</feature>
<feature type="glycosylation site" description="N-linked (GlcNAc...) asparagine" evidence="1">
    <location>
        <position position="312"/>
    </location>
</feature>
<feature type="glycosylation site" description="N-linked (GlcNAc...) asparagine" evidence="1">
    <location>
        <position position="316"/>
    </location>
</feature>
<feature type="glycosylation site" description="N-linked (GlcNAc...) asparagine" evidence="1">
    <location>
        <position position="387"/>
    </location>
</feature>
<feature type="glycosylation site" description="N-linked (GlcNAc...) asparagine" evidence="1">
    <location>
        <position position="413"/>
    </location>
</feature>
<feature type="disulfide bond" evidence="2">
    <location>
        <begin position="383"/>
        <end position="410"/>
    </location>
</feature>
<feature type="disulfide bond" evidence="2">
    <location>
        <begin position="398"/>
        <end position="412"/>
    </location>
</feature>
<feature type="sequence variant" id="VAR_055138" description="In dbSNP:rs1144122." evidence="3">
    <original>K</original>
    <variation>E</variation>
    <location>
        <position position="151"/>
    </location>
</feature>
<feature type="sequence variant" id="VAR_049459" description="In dbSNP:rs16842529.">
    <original>T</original>
    <variation>S</variation>
    <location>
        <position position="645"/>
    </location>
</feature>
<feature type="sequence variant" id="VAR_049460" description="In dbSNP:rs9872512.">
    <original>R</original>
    <variation>H</variation>
    <location>
        <position position="756"/>
    </location>
</feature>
<name>AGRG7_HUMAN</name>
<protein>
    <recommendedName>
        <fullName evidence="4">Adhesion G-protein coupled receptor G7</fullName>
    </recommendedName>
    <alternativeName>
        <fullName>G-protein coupled receptor 128</fullName>
    </alternativeName>
</protein>
<proteinExistence type="evidence at protein level"/>
<reference key="1">
    <citation type="journal article" date="2003" name="Biochem. Biophys. Res. Commun.">
        <title>There exist at least 30 human G-protein-coupled receptors with long Ser/Thr-rich N-termini.</title>
        <authorList>
            <person name="Fredriksson R."/>
            <person name="Gloriam D.E.I."/>
            <person name="Hoeglund P.J."/>
            <person name="Lagerstroem M.C."/>
            <person name="Schioeth H.B."/>
        </authorList>
    </citation>
    <scope>NUCLEOTIDE SEQUENCE [MRNA]</scope>
</reference>
<reference key="2">
    <citation type="journal article" date="2004" name="Nat. Genet.">
        <title>Complete sequencing and characterization of 21,243 full-length human cDNAs.</title>
        <authorList>
            <person name="Ota T."/>
            <person name="Suzuki Y."/>
            <person name="Nishikawa T."/>
            <person name="Otsuki T."/>
            <person name="Sugiyama T."/>
            <person name="Irie R."/>
            <person name="Wakamatsu A."/>
            <person name="Hayashi K."/>
            <person name="Sato H."/>
            <person name="Nagai K."/>
            <person name="Kimura K."/>
            <person name="Makita H."/>
            <person name="Sekine M."/>
            <person name="Obayashi M."/>
            <person name="Nishi T."/>
            <person name="Shibahara T."/>
            <person name="Tanaka T."/>
            <person name="Ishii S."/>
            <person name="Yamamoto J."/>
            <person name="Saito K."/>
            <person name="Kawai Y."/>
            <person name="Isono Y."/>
            <person name="Nakamura Y."/>
            <person name="Nagahari K."/>
            <person name="Murakami K."/>
            <person name="Yasuda T."/>
            <person name="Iwayanagi T."/>
            <person name="Wagatsuma M."/>
            <person name="Shiratori A."/>
            <person name="Sudo H."/>
            <person name="Hosoiri T."/>
            <person name="Kaku Y."/>
            <person name="Kodaira H."/>
            <person name="Kondo H."/>
            <person name="Sugawara M."/>
            <person name="Takahashi M."/>
            <person name="Kanda K."/>
            <person name="Yokoi T."/>
            <person name="Furuya T."/>
            <person name="Kikkawa E."/>
            <person name="Omura Y."/>
            <person name="Abe K."/>
            <person name="Kamihara K."/>
            <person name="Katsuta N."/>
            <person name="Sato K."/>
            <person name="Tanikawa M."/>
            <person name="Yamazaki M."/>
            <person name="Ninomiya K."/>
            <person name="Ishibashi T."/>
            <person name="Yamashita H."/>
            <person name="Murakawa K."/>
            <person name="Fujimori K."/>
            <person name="Tanai H."/>
            <person name="Kimata M."/>
            <person name="Watanabe M."/>
            <person name="Hiraoka S."/>
            <person name="Chiba Y."/>
            <person name="Ishida S."/>
            <person name="Ono Y."/>
            <person name="Takiguchi S."/>
            <person name="Watanabe S."/>
            <person name="Yosida M."/>
            <person name="Hotuta T."/>
            <person name="Kusano J."/>
            <person name="Kanehori K."/>
            <person name="Takahashi-Fujii A."/>
            <person name="Hara H."/>
            <person name="Tanase T.-O."/>
            <person name="Nomura Y."/>
            <person name="Togiya S."/>
            <person name="Komai F."/>
            <person name="Hara R."/>
            <person name="Takeuchi K."/>
            <person name="Arita M."/>
            <person name="Imose N."/>
            <person name="Musashino K."/>
            <person name="Yuuki H."/>
            <person name="Oshima A."/>
            <person name="Sasaki N."/>
            <person name="Aotsuka S."/>
            <person name="Yoshikawa Y."/>
            <person name="Matsunawa H."/>
            <person name="Ichihara T."/>
            <person name="Shiohata N."/>
            <person name="Sano S."/>
            <person name="Moriya S."/>
            <person name="Momiyama H."/>
            <person name="Satoh N."/>
            <person name="Takami S."/>
            <person name="Terashima Y."/>
            <person name="Suzuki O."/>
            <person name="Nakagawa S."/>
            <person name="Senoh A."/>
            <person name="Mizoguchi H."/>
            <person name="Goto Y."/>
            <person name="Shimizu F."/>
            <person name="Wakebe H."/>
            <person name="Hishigaki H."/>
            <person name="Watanabe T."/>
            <person name="Sugiyama A."/>
            <person name="Takemoto M."/>
            <person name="Kawakami B."/>
            <person name="Yamazaki M."/>
            <person name="Watanabe K."/>
            <person name="Kumagai A."/>
            <person name="Itakura S."/>
            <person name="Fukuzumi Y."/>
            <person name="Fujimori Y."/>
            <person name="Komiyama M."/>
            <person name="Tashiro H."/>
            <person name="Tanigami A."/>
            <person name="Fujiwara T."/>
            <person name="Ono T."/>
            <person name="Yamada K."/>
            <person name="Fujii Y."/>
            <person name="Ozaki K."/>
            <person name="Hirao M."/>
            <person name="Ohmori Y."/>
            <person name="Kawabata A."/>
            <person name="Hikiji T."/>
            <person name="Kobatake N."/>
            <person name="Inagaki H."/>
            <person name="Ikema Y."/>
            <person name="Okamoto S."/>
            <person name="Okitani R."/>
            <person name="Kawakami T."/>
            <person name="Noguchi S."/>
            <person name="Itoh T."/>
            <person name="Shigeta K."/>
            <person name="Senba T."/>
            <person name="Matsumura K."/>
            <person name="Nakajima Y."/>
            <person name="Mizuno T."/>
            <person name="Morinaga M."/>
            <person name="Sasaki M."/>
            <person name="Togashi T."/>
            <person name="Oyama M."/>
            <person name="Hata H."/>
            <person name="Watanabe M."/>
            <person name="Komatsu T."/>
            <person name="Mizushima-Sugano J."/>
            <person name="Satoh T."/>
            <person name="Shirai Y."/>
            <person name="Takahashi Y."/>
            <person name="Nakagawa K."/>
            <person name="Okumura K."/>
            <person name="Nagase T."/>
            <person name="Nomura N."/>
            <person name="Kikuchi H."/>
            <person name="Masuho Y."/>
            <person name="Yamashita R."/>
            <person name="Nakai K."/>
            <person name="Yada T."/>
            <person name="Nakamura Y."/>
            <person name="Ohara O."/>
            <person name="Isogai T."/>
            <person name="Sugano S."/>
        </authorList>
    </citation>
    <scope>NUCLEOTIDE SEQUENCE [LARGE SCALE MRNA]</scope>
    <scope>VARIANT GLU-151</scope>
    <source>
        <tissue>Embryo</tissue>
    </source>
</reference>
<reference key="3">
    <citation type="submission" date="2005-09" db="EMBL/GenBank/DDBJ databases">
        <authorList>
            <person name="Mural R.J."/>
            <person name="Istrail S."/>
            <person name="Sutton G.G."/>
            <person name="Florea L."/>
            <person name="Halpern A.L."/>
            <person name="Mobarry C.M."/>
            <person name="Lippert R."/>
            <person name="Walenz B."/>
            <person name="Shatkay H."/>
            <person name="Dew I."/>
            <person name="Miller J.R."/>
            <person name="Flanigan M.J."/>
            <person name="Edwards N.J."/>
            <person name="Bolanos R."/>
            <person name="Fasulo D."/>
            <person name="Halldorsson B.V."/>
            <person name="Hannenhalli S."/>
            <person name="Turner R."/>
            <person name="Yooseph S."/>
            <person name="Lu F."/>
            <person name="Nusskern D.R."/>
            <person name="Shue B.C."/>
            <person name="Zheng X.H."/>
            <person name="Zhong F."/>
            <person name="Delcher A.L."/>
            <person name="Huson D.H."/>
            <person name="Kravitz S.A."/>
            <person name="Mouchard L."/>
            <person name="Reinert K."/>
            <person name="Remington K.A."/>
            <person name="Clark A.G."/>
            <person name="Waterman M.S."/>
            <person name="Eichler E.E."/>
            <person name="Adams M.D."/>
            <person name="Hunkapiller M.W."/>
            <person name="Myers E.W."/>
            <person name="Venter J.C."/>
        </authorList>
    </citation>
    <scope>NUCLEOTIDE SEQUENCE [LARGE SCALE GENOMIC DNA]</scope>
</reference>
<reference key="4">
    <citation type="journal article" date="2004" name="Genome Res.">
        <title>The status, quality, and expansion of the NIH full-length cDNA project: the Mammalian Gene Collection (MGC).</title>
        <authorList>
            <consortium name="The MGC Project Team"/>
        </authorList>
    </citation>
    <scope>NUCLEOTIDE SEQUENCE [LARGE SCALE MRNA]</scope>
</reference>
<reference key="5">
    <citation type="journal article" date="2015" name="Pharmacol. Rev.">
        <title>International union of basic and clinical pharmacology. XCIV. Adhesion G protein-coupled receptors.</title>
        <authorList>
            <person name="Hamann J."/>
            <person name="Aust G."/>
            <person name="Arac D."/>
            <person name="Engel F.B."/>
            <person name="Formstone C."/>
            <person name="Fredriksson R."/>
            <person name="Hall R.A."/>
            <person name="Harty B.L."/>
            <person name="Kirchhoff C."/>
            <person name="Knapp B."/>
            <person name="Krishnan A."/>
            <person name="Liebscher I."/>
            <person name="Lin H.H."/>
            <person name="Martinelli D.C."/>
            <person name="Monk K.R."/>
            <person name="Peeters M.C."/>
            <person name="Piao X."/>
            <person name="Promel S."/>
            <person name="Schoneberg T."/>
            <person name="Schwartz T.W."/>
            <person name="Singer K."/>
            <person name="Stacey M."/>
            <person name="Ushkaryov Y.A."/>
            <person name="Vallon M."/>
            <person name="Wolfrum U."/>
            <person name="Wright M.W."/>
            <person name="Xu L."/>
            <person name="Langenhan T."/>
            <person name="Schioth H.B."/>
        </authorList>
    </citation>
    <scope>NOMENCLATURE</scope>
</reference>
<organism>
    <name type="scientific">Homo sapiens</name>
    <name type="common">Human</name>
    <dbReference type="NCBI Taxonomy" id="9606"/>
    <lineage>
        <taxon>Eukaryota</taxon>
        <taxon>Metazoa</taxon>
        <taxon>Chordata</taxon>
        <taxon>Craniata</taxon>
        <taxon>Vertebrata</taxon>
        <taxon>Euteleostomi</taxon>
        <taxon>Mammalia</taxon>
        <taxon>Eutheria</taxon>
        <taxon>Euarchontoglires</taxon>
        <taxon>Primates</taxon>
        <taxon>Haplorrhini</taxon>
        <taxon>Catarrhini</taxon>
        <taxon>Hominidae</taxon>
        <taxon>Homo</taxon>
    </lineage>
</organism>
<gene>
    <name type="primary">ADGRG7</name>
    <name type="synonym">GPR128</name>
</gene>